<protein>
    <recommendedName>
        <fullName evidence="1">Biotin synthase</fullName>
        <ecNumber evidence="1">2.8.1.6</ecNumber>
    </recommendedName>
</protein>
<proteinExistence type="inferred from homology"/>
<accession>A4T9L9</accession>
<comment type="function">
    <text evidence="1">Catalyzes the conversion of dethiobiotin (DTB) to biotin by the insertion of a sulfur atom into dethiobiotin via a radical-based mechanism.</text>
</comment>
<comment type="catalytic activity">
    <reaction evidence="1">
        <text>(4R,5S)-dethiobiotin + (sulfur carrier)-SH + 2 reduced [2Fe-2S]-[ferredoxin] + 2 S-adenosyl-L-methionine = (sulfur carrier)-H + biotin + 2 5'-deoxyadenosine + 2 L-methionine + 2 oxidized [2Fe-2S]-[ferredoxin]</text>
        <dbReference type="Rhea" id="RHEA:22060"/>
        <dbReference type="Rhea" id="RHEA-COMP:10000"/>
        <dbReference type="Rhea" id="RHEA-COMP:10001"/>
        <dbReference type="Rhea" id="RHEA-COMP:14737"/>
        <dbReference type="Rhea" id="RHEA-COMP:14739"/>
        <dbReference type="ChEBI" id="CHEBI:17319"/>
        <dbReference type="ChEBI" id="CHEBI:29917"/>
        <dbReference type="ChEBI" id="CHEBI:33737"/>
        <dbReference type="ChEBI" id="CHEBI:33738"/>
        <dbReference type="ChEBI" id="CHEBI:57586"/>
        <dbReference type="ChEBI" id="CHEBI:57844"/>
        <dbReference type="ChEBI" id="CHEBI:59789"/>
        <dbReference type="ChEBI" id="CHEBI:64428"/>
        <dbReference type="ChEBI" id="CHEBI:149473"/>
        <dbReference type="EC" id="2.8.1.6"/>
    </reaction>
</comment>
<comment type="cofactor">
    <cofactor evidence="1">
        <name>[4Fe-4S] cluster</name>
        <dbReference type="ChEBI" id="CHEBI:49883"/>
    </cofactor>
    <text evidence="1">Binds 1 [4Fe-4S] cluster. The cluster is coordinated with 3 cysteines and an exchangeable S-adenosyl-L-methionine.</text>
</comment>
<comment type="cofactor">
    <cofactor evidence="1">
        <name>[2Fe-2S] cluster</name>
        <dbReference type="ChEBI" id="CHEBI:190135"/>
    </cofactor>
    <text evidence="1">Binds 1 [2Fe-2S] cluster. The cluster is coordinated with 3 cysteines and 1 arginine.</text>
</comment>
<comment type="pathway">
    <text evidence="1">Cofactor biosynthesis; biotin biosynthesis; biotin from 7,8-diaminononanoate: step 2/2.</text>
</comment>
<comment type="subunit">
    <text evidence="1">Homodimer.</text>
</comment>
<comment type="similarity">
    <text evidence="1">Belongs to the radical SAM superfamily. Biotin synthase family.</text>
</comment>
<sequence length="331" mass="35701">MSDILAVAREQVLERGVGLDQDQTLQVLQLPDDRLDELLALAHEVRMAHCGPDVEVEGIISLKTGGCPEDCHFCSQSGLFASPVRSAWLDVPSLVEAAKQTAKTGATEFCIVAAVRGPDERLLAQVAAGIEAIRNEVDIQIACSLGMLTQDQVERLSAMGVHRYNHNLETARSFFTNVVTTHSWEERWETLQMVREAGMEVCCGGILGMGESLGQRAEFAANLAELDPHEVPLNFLNPRPGTPFGDLEVLPATEALKAVAAFRLALPRTMLRFAGGREITLGDLGAKQGILGGINAVIVGNYLTTLGRPAEADLQLLDDLQMPIKALNATL</sequence>
<evidence type="ECO:0000255" key="1">
    <source>
        <dbReference type="HAMAP-Rule" id="MF_01694"/>
    </source>
</evidence>
<evidence type="ECO:0000255" key="2">
    <source>
        <dbReference type="PROSITE-ProRule" id="PRU01266"/>
    </source>
</evidence>
<dbReference type="EC" id="2.8.1.6" evidence="1"/>
<dbReference type="EMBL" id="CP000656">
    <property type="protein sequence ID" value="ABP46098.1"/>
    <property type="molecule type" value="Genomic_DNA"/>
</dbReference>
<dbReference type="SMR" id="A4T9L9"/>
<dbReference type="STRING" id="350054.Mflv_3624"/>
<dbReference type="KEGG" id="mgi:Mflv_3624"/>
<dbReference type="eggNOG" id="COG0502">
    <property type="taxonomic scope" value="Bacteria"/>
</dbReference>
<dbReference type="HOGENOM" id="CLU_033172_2_1_11"/>
<dbReference type="OrthoDB" id="9786826at2"/>
<dbReference type="UniPathway" id="UPA00078">
    <property type="reaction ID" value="UER00162"/>
</dbReference>
<dbReference type="GO" id="GO:0051537">
    <property type="term" value="F:2 iron, 2 sulfur cluster binding"/>
    <property type="evidence" value="ECO:0007669"/>
    <property type="project" value="UniProtKB-KW"/>
</dbReference>
<dbReference type="GO" id="GO:0051539">
    <property type="term" value="F:4 iron, 4 sulfur cluster binding"/>
    <property type="evidence" value="ECO:0007669"/>
    <property type="project" value="UniProtKB-KW"/>
</dbReference>
<dbReference type="GO" id="GO:0004076">
    <property type="term" value="F:biotin synthase activity"/>
    <property type="evidence" value="ECO:0007669"/>
    <property type="project" value="UniProtKB-UniRule"/>
</dbReference>
<dbReference type="GO" id="GO:0005506">
    <property type="term" value="F:iron ion binding"/>
    <property type="evidence" value="ECO:0007669"/>
    <property type="project" value="UniProtKB-UniRule"/>
</dbReference>
<dbReference type="GO" id="GO:0009102">
    <property type="term" value="P:biotin biosynthetic process"/>
    <property type="evidence" value="ECO:0007669"/>
    <property type="project" value="UniProtKB-UniRule"/>
</dbReference>
<dbReference type="CDD" id="cd01335">
    <property type="entry name" value="Radical_SAM"/>
    <property type="match status" value="1"/>
</dbReference>
<dbReference type="FunFam" id="3.20.20.70:FF:000026">
    <property type="entry name" value="Biotin synthase"/>
    <property type="match status" value="1"/>
</dbReference>
<dbReference type="Gene3D" id="3.20.20.70">
    <property type="entry name" value="Aldolase class I"/>
    <property type="match status" value="1"/>
</dbReference>
<dbReference type="HAMAP" id="MF_01694">
    <property type="entry name" value="BioB"/>
    <property type="match status" value="1"/>
</dbReference>
<dbReference type="InterPro" id="IPR013785">
    <property type="entry name" value="Aldolase_TIM"/>
</dbReference>
<dbReference type="InterPro" id="IPR010722">
    <property type="entry name" value="BATS_dom"/>
</dbReference>
<dbReference type="InterPro" id="IPR002684">
    <property type="entry name" value="Biotin_synth/BioAB"/>
</dbReference>
<dbReference type="InterPro" id="IPR024177">
    <property type="entry name" value="Biotin_synthase"/>
</dbReference>
<dbReference type="InterPro" id="IPR006638">
    <property type="entry name" value="Elp3/MiaA/NifB-like_rSAM"/>
</dbReference>
<dbReference type="InterPro" id="IPR007197">
    <property type="entry name" value="rSAM"/>
</dbReference>
<dbReference type="NCBIfam" id="TIGR00433">
    <property type="entry name" value="bioB"/>
    <property type="match status" value="1"/>
</dbReference>
<dbReference type="PANTHER" id="PTHR22976">
    <property type="entry name" value="BIOTIN SYNTHASE"/>
    <property type="match status" value="1"/>
</dbReference>
<dbReference type="PANTHER" id="PTHR22976:SF2">
    <property type="entry name" value="BIOTIN SYNTHASE, MITOCHONDRIAL"/>
    <property type="match status" value="1"/>
</dbReference>
<dbReference type="Pfam" id="PF06968">
    <property type="entry name" value="BATS"/>
    <property type="match status" value="1"/>
</dbReference>
<dbReference type="Pfam" id="PF04055">
    <property type="entry name" value="Radical_SAM"/>
    <property type="match status" value="1"/>
</dbReference>
<dbReference type="PIRSF" id="PIRSF001619">
    <property type="entry name" value="Biotin_synth"/>
    <property type="match status" value="1"/>
</dbReference>
<dbReference type="SFLD" id="SFLDG01060">
    <property type="entry name" value="BATS_domain_containing"/>
    <property type="match status" value="1"/>
</dbReference>
<dbReference type="SFLD" id="SFLDG01278">
    <property type="entry name" value="biotin_synthase_like"/>
    <property type="match status" value="1"/>
</dbReference>
<dbReference type="SMART" id="SM00876">
    <property type="entry name" value="BATS"/>
    <property type="match status" value="1"/>
</dbReference>
<dbReference type="SMART" id="SM00729">
    <property type="entry name" value="Elp3"/>
    <property type="match status" value="1"/>
</dbReference>
<dbReference type="SUPFAM" id="SSF102114">
    <property type="entry name" value="Radical SAM enzymes"/>
    <property type="match status" value="1"/>
</dbReference>
<dbReference type="PROSITE" id="PS51918">
    <property type="entry name" value="RADICAL_SAM"/>
    <property type="match status" value="1"/>
</dbReference>
<gene>
    <name evidence="1" type="primary">bioB</name>
    <name type="ordered locus">Mflv_3624</name>
</gene>
<keyword id="KW-0001">2Fe-2S</keyword>
<keyword id="KW-0004">4Fe-4S</keyword>
<keyword id="KW-0093">Biotin biosynthesis</keyword>
<keyword id="KW-0408">Iron</keyword>
<keyword id="KW-0411">Iron-sulfur</keyword>
<keyword id="KW-0479">Metal-binding</keyword>
<keyword id="KW-0949">S-adenosyl-L-methionine</keyword>
<keyword id="KW-0808">Transferase</keyword>
<reference key="1">
    <citation type="submission" date="2007-04" db="EMBL/GenBank/DDBJ databases">
        <title>Complete sequence of chromosome of Mycobacterium gilvum PYR-GCK.</title>
        <authorList>
            <consortium name="US DOE Joint Genome Institute"/>
            <person name="Copeland A."/>
            <person name="Lucas S."/>
            <person name="Lapidus A."/>
            <person name="Barry K."/>
            <person name="Detter J.C."/>
            <person name="Glavina del Rio T."/>
            <person name="Hammon N."/>
            <person name="Israni S."/>
            <person name="Dalin E."/>
            <person name="Tice H."/>
            <person name="Pitluck S."/>
            <person name="Chain P."/>
            <person name="Malfatti S."/>
            <person name="Shin M."/>
            <person name="Vergez L."/>
            <person name="Schmutz J."/>
            <person name="Larimer F."/>
            <person name="Land M."/>
            <person name="Hauser L."/>
            <person name="Kyrpides N."/>
            <person name="Mikhailova N."/>
            <person name="Miller C."/>
            <person name="Richardson P."/>
        </authorList>
    </citation>
    <scope>NUCLEOTIDE SEQUENCE [LARGE SCALE GENOMIC DNA]</scope>
    <source>
        <strain>PYR-GCK</strain>
    </source>
</reference>
<name>BIOB_MYCGI</name>
<feature type="chain" id="PRO_0000381478" description="Biotin synthase">
    <location>
        <begin position="1"/>
        <end position="331"/>
    </location>
</feature>
<feature type="domain" description="Radical SAM core" evidence="2">
    <location>
        <begin position="52"/>
        <end position="277"/>
    </location>
</feature>
<feature type="binding site" evidence="1">
    <location>
        <position position="67"/>
    </location>
    <ligand>
        <name>[4Fe-4S] cluster</name>
        <dbReference type="ChEBI" id="CHEBI:49883"/>
        <note>4Fe-4S-S-AdoMet</note>
    </ligand>
</feature>
<feature type="binding site" evidence="1">
    <location>
        <position position="71"/>
    </location>
    <ligand>
        <name>[4Fe-4S] cluster</name>
        <dbReference type="ChEBI" id="CHEBI:49883"/>
        <note>4Fe-4S-S-AdoMet</note>
    </ligand>
</feature>
<feature type="binding site" evidence="1">
    <location>
        <position position="74"/>
    </location>
    <ligand>
        <name>[4Fe-4S] cluster</name>
        <dbReference type="ChEBI" id="CHEBI:49883"/>
        <note>4Fe-4S-S-AdoMet</note>
    </ligand>
</feature>
<feature type="binding site" evidence="1">
    <location>
        <position position="110"/>
    </location>
    <ligand>
        <name>[2Fe-2S] cluster</name>
        <dbReference type="ChEBI" id="CHEBI:190135"/>
    </ligand>
</feature>
<feature type="binding site" evidence="1">
    <location>
        <position position="143"/>
    </location>
    <ligand>
        <name>[2Fe-2S] cluster</name>
        <dbReference type="ChEBI" id="CHEBI:190135"/>
    </ligand>
</feature>
<feature type="binding site" evidence="1">
    <location>
        <position position="202"/>
    </location>
    <ligand>
        <name>[2Fe-2S] cluster</name>
        <dbReference type="ChEBI" id="CHEBI:190135"/>
    </ligand>
</feature>
<feature type="binding site" evidence="1">
    <location>
        <position position="272"/>
    </location>
    <ligand>
        <name>[2Fe-2S] cluster</name>
        <dbReference type="ChEBI" id="CHEBI:190135"/>
    </ligand>
</feature>
<organism>
    <name type="scientific">Mycolicibacterium gilvum (strain PYR-GCK)</name>
    <name type="common">Mycobacterium gilvum (strain PYR-GCK)</name>
    <dbReference type="NCBI Taxonomy" id="350054"/>
    <lineage>
        <taxon>Bacteria</taxon>
        <taxon>Bacillati</taxon>
        <taxon>Actinomycetota</taxon>
        <taxon>Actinomycetes</taxon>
        <taxon>Mycobacteriales</taxon>
        <taxon>Mycobacteriaceae</taxon>
        <taxon>Mycolicibacterium</taxon>
    </lineage>
</organism>